<accession>Q0VQH0</accession>
<organism>
    <name type="scientific">Alcanivorax borkumensis (strain ATCC 700651 / DSM 11573 / NCIMB 13689 / SK2)</name>
    <dbReference type="NCBI Taxonomy" id="393595"/>
    <lineage>
        <taxon>Bacteria</taxon>
        <taxon>Pseudomonadati</taxon>
        <taxon>Pseudomonadota</taxon>
        <taxon>Gammaproteobacteria</taxon>
        <taxon>Oceanospirillales</taxon>
        <taxon>Alcanivoracaceae</taxon>
        <taxon>Alcanivorax</taxon>
    </lineage>
</organism>
<gene>
    <name evidence="1" type="primary">uppP</name>
    <name type="synonym">bacA</name>
    <name type="ordered locus">ABO_1130</name>
</gene>
<name>UPPP_ALCBS</name>
<comment type="function">
    <text evidence="1">Catalyzes the dephosphorylation of undecaprenyl diphosphate (UPP). Confers resistance to bacitracin.</text>
</comment>
<comment type="catalytic activity">
    <reaction evidence="1">
        <text>di-trans,octa-cis-undecaprenyl diphosphate + H2O = di-trans,octa-cis-undecaprenyl phosphate + phosphate + H(+)</text>
        <dbReference type="Rhea" id="RHEA:28094"/>
        <dbReference type="ChEBI" id="CHEBI:15377"/>
        <dbReference type="ChEBI" id="CHEBI:15378"/>
        <dbReference type="ChEBI" id="CHEBI:43474"/>
        <dbReference type="ChEBI" id="CHEBI:58405"/>
        <dbReference type="ChEBI" id="CHEBI:60392"/>
        <dbReference type="EC" id="3.6.1.27"/>
    </reaction>
</comment>
<comment type="subcellular location">
    <subcellularLocation>
        <location evidence="1">Cell inner membrane</location>
        <topology evidence="1">Multi-pass membrane protein</topology>
    </subcellularLocation>
</comment>
<comment type="miscellaneous">
    <text>Bacitracin is thought to be involved in the inhibition of peptidoglycan synthesis by sequestering undecaprenyl diphosphate, thereby reducing the pool of lipid carrier available.</text>
</comment>
<comment type="similarity">
    <text evidence="1">Belongs to the UppP family.</text>
</comment>
<keyword id="KW-0046">Antibiotic resistance</keyword>
<keyword id="KW-0997">Cell inner membrane</keyword>
<keyword id="KW-1003">Cell membrane</keyword>
<keyword id="KW-0133">Cell shape</keyword>
<keyword id="KW-0961">Cell wall biogenesis/degradation</keyword>
<keyword id="KW-0378">Hydrolase</keyword>
<keyword id="KW-0472">Membrane</keyword>
<keyword id="KW-0573">Peptidoglycan synthesis</keyword>
<keyword id="KW-1185">Reference proteome</keyword>
<keyword id="KW-0812">Transmembrane</keyword>
<keyword id="KW-1133">Transmembrane helix</keyword>
<evidence type="ECO:0000255" key="1">
    <source>
        <dbReference type="HAMAP-Rule" id="MF_01006"/>
    </source>
</evidence>
<proteinExistence type="inferred from homology"/>
<sequence length="265" mass="28661">MDWFQALVLALIQGLTEFLPISSSAHLILPSQILGWPDQGLAFDVAVHLGTLLAVMMYYRRDLIAMVGGAGLAVQQRRMNDDLKLGLLVALATIPAVVFGFLGDDFIERELRSALVIAITTLVFGALLWASDAFGKREFSLARLGVAGAIFIGLAQALALIPGTSRSGITITAALALGYRREDAARFSFLLSIPVILGAGLLKTKDLIEQQVVVDWGMMALGVIVSAVTAYLTIVFFIRLLERVGMLPFVVYRLILGVALLFWLA</sequence>
<protein>
    <recommendedName>
        <fullName evidence="1">Undecaprenyl-diphosphatase</fullName>
        <ecNumber evidence="1">3.6.1.27</ecNumber>
    </recommendedName>
    <alternativeName>
        <fullName evidence="1">Bacitracin resistance protein</fullName>
    </alternativeName>
    <alternativeName>
        <fullName evidence="1">Undecaprenyl pyrophosphate phosphatase</fullName>
    </alternativeName>
</protein>
<feature type="chain" id="PRO_0000290679" description="Undecaprenyl-diphosphatase">
    <location>
        <begin position="1"/>
        <end position="265"/>
    </location>
</feature>
<feature type="transmembrane region" description="Helical" evidence="1">
    <location>
        <begin position="1"/>
        <end position="21"/>
    </location>
</feature>
<feature type="transmembrane region" description="Helical" evidence="1">
    <location>
        <begin position="39"/>
        <end position="59"/>
    </location>
</feature>
<feature type="transmembrane region" description="Helical" evidence="1">
    <location>
        <begin position="83"/>
        <end position="103"/>
    </location>
</feature>
<feature type="transmembrane region" description="Helical" evidence="1">
    <location>
        <begin position="114"/>
        <end position="134"/>
    </location>
</feature>
<feature type="transmembrane region" description="Helical" evidence="1">
    <location>
        <begin position="144"/>
        <end position="164"/>
    </location>
</feature>
<feature type="transmembrane region" description="Helical" evidence="1">
    <location>
        <begin position="188"/>
        <end position="208"/>
    </location>
</feature>
<feature type="transmembrane region" description="Helical" evidence="1">
    <location>
        <begin position="218"/>
        <end position="238"/>
    </location>
</feature>
<feature type="transmembrane region" description="Helical" evidence="1">
    <location>
        <begin position="244"/>
        <end position="264"/>
    </location>
</feature>
<reference key="1">
    <citation type="journal article" date="2006" name="Nat. Biotechnol.">
        <title>Genome sequence of the ubiquitous hydrocarbon-degrading marine bacterium Alcanivorax borkumensis.</title>
        <authorList>
            <person name="Schneiker S."/>
            <person name="Martins dos Santos V.A.P."/>
            <person name="Bartels D."/>
            <person name="Bekel T."/>
            <person name="Brecht M."/>
            <person name="Buhrmester J."/>
            <person name="Chernikova T.N."/>
            <person name="Denaro R."/>
            <person name="Ferrer M."/>
            <person name="Gertler C."/>
            <person name="Goesmann A."/>
            <person name="Golyshina O.V."/>
            <person name="Kaminski F."/>
            <person name="Khachane A.N."/>
            <person name="Lang S."/>
            <person name="Linke B."/>
            <person name="McHardy A.C."/>
            <person name="Meyer F."/>
            <person name="Nechitaylo T."/>
            <person name="Puehler A."/>
            <person name="Regenhardt D."/>
            <person name="Rupp O."/>
            <person name="Sabirova J.S."/>
            <person name="Selbitschka W."/>
            <person name="Yakimov M.M."/>
            <person name="Timmis K.N."/>
            <person name="Vorhoelter F.-J."/>
            <person name="Weidner S."/>
            <person name="Kaiser O."/>
            <person name="Golyshin P.N."/>
        </authorList>
    </citation>
    <scope>NUCLEOTIDE SEQUENCE [LARGE SCALE GENOMIC DNA]</scope>
    <source>
        <strain>ATCC 700651 / DSM 11573 / NCIMB 13689 / SK2</strain>
    </source>
</reference>
<dbReference type="EC" id="3.6.1.27" evidence="1"/>
<dbReference type="EMBL" id="AM286690">
    <property type="protein sequence ID" value="CAL16578.1"/>
    <property type="molecule type" value="Genomic_DNA"/>
</dbReference>
<dbReference type="RefSeq" id="WP_011588413.1">
    <property type="nucleotide sequence ID" value="NC_008260.1"/>
</dbReference>
<dbReference type="SMR" id="Q0VQH0"/>
<dbReference type="STRING" id="393595.ABO_1130"/>
<dbReference type="KEGG" id="abo:ABO_1130"/>
<dbReference type="eggNOG" id="COG1968">
    <property type="taxonomic scope" value="Bacteria"/>
</dbReference>
<dbReference type="HOGENOM" id="CLU_060296_1_0_6"/>
<dbReference type="OrthoDB" id="9808289at2"/>
<dbReference type="Proteomes" id="UP000008871">
    <property type="component" value="Chromosome"/>
</dbReference>
<dbReference type="GO" id="GO:0005886">
    <property type="term" value="C:plasma membrane"/>
    <property type="evidence" value="ECO:0007669"/>
    <property type="project" value="UniProtKB-SubCell"/>
</dbReference>
<dbReference type="GO" id="GO:0050380">
    <property type="term" value="F:undecaprenyl-diphosphatase activity"/>
    <property type="evidence" value="ECO:0007669"/>
    <property type="project" value="UniProtKB-UniRule"/>
</dbReference>
<dbReference type="GO" id="GO:0071555">
    <property type="term" value="P:cell wall organization"/>
    <property type="evidence" value="ECO:0007669"/>
    <property type="project" value="UniProtKB-KW"/>
</dbReference>
<dbReference type="GO" id="GO:0009252">
    <property type="term" value="P:peptidoglycan biosynthetic process"/>
    <property type="evidence" value="ECO:0007669"/>
    <property type="project" value="UniProtKB-KW"/>
</dbReference>
<dbReference type="GO" id="GO:0008360">
    <property type="term" value="P:regulation of cell shape"/>
    <property type="evidence" value="ECO:0007669"/>
    <property type="project" value="UniProtKB-KW"/>
</dbReference>
<dbReference type="GO" id="GO:0046677">
    <property type="term" value="P:response to antibiotic"/>
    <property type="evidence" value="ECO:0007669"/>
    <property type="project" value="UniProtKB-UniRule"/>
</dbReference>
<dbReference type="HAMAP" id="MF_01006">
    <property type="entry name" value="Undec_diphosphatase"/>
    <property type="match status" value="1"/>
</dbReference>
<dbReference type="InterPro" id="IPR003824">
    <property type="entry name" value="UppP"/>
</dbReference>
<dbReference type="NCBIfam" id="NF001393">
    <property type="entry name" value="PRK00281.2-4"/>
    <property type="match status" value="1"/>
</dbReference>
<dbReference type="NCBIfam" id="TIGR00753">
    <property type="entry name" value="undec_PP_bacA"/>
    <property type="match status" value="1"/>
</dbReference>
<dbReference type="PANTHER" id="PTHR30622">
    <property type="entry name" value="UNDECAPRENYL-DIPHOSPHATASE"/>
    <property type="match status" value="1"/>
</dbReference>
<dbReference type="PANTHER" id="PTHR30622:SF4">
    <property type="entry name" value="UNDECAPRENYL-DIPHOSPHATASE"/>
    <property type="match status" value="1"/>
</dbReference>
<dbReference type="Pfam" id="PF02673">
    <property type="entry name" value="BacA"/>
    <property type="match status" value="1"/>
</dbReference>